<proteinExistence type="evidence at protein level"/>
<accession>P9WPJ1</accession>
<accession>F2GLB0</accession>
<accession>L0TCC6</accession>
<accession>P71628</accession>
<accession>Q7D6I1</accession>
<organism>
    <name type="scientific">Mycobacterium tuberculosis (strain ATCC 25618 / H37Rv)</name>
    <dbReference type="NCBI Taxonomy" id="83332"/>
    <lineage>
        <taxon>Bacteria</taxon>
        <taxon>Bacillati</taxon>
        <taxon>Actinomycetota</taxon>
        <taxon>Actinomycetes</taxon>
        <taxon>Mycobacteriales</taxon>
        <taxon>Mycobacteriaceae</taxon>
        <taxon>Mycobacterium</taxon>
        <taxon>Mycobacterium tuberculosis complex</taxon>
    </lineage>
</organism>
<keyword id="KW-0051">Antiviral defense</keyword>
<keyword id="KW-0255">Endonuclease</keyword>
<keyword id="KW-0378">Hydrolase</keyword>
<keyword id="KW-0540">Nuclease</keyword>
<keyword id="KW-1185">Reference proteome</keyword>
<keyword id="KW-0694">RNA-binding</keyword>
<dbReference type="EC" id="3.1.-.-" evidence="2"/>
<dbReference type="EMBL" id="AL123456">
    <property type="protein sequence ID" value="CCP45624.1"/>
    <property type="molecule type" value="Genomic_DNA"/>
</dbReference>
<dbReference type="PIR" id="C70692">
    <property type="entry name" value="C70692"/>
</dbReference>
<dbReference type="RefSeq" id="NP_217340.1">
    <property type="nucleotide sequence ID" value="NC_000962.3"/>
</dbReference>
<dbReference type="RefSeq" id="WP_003899496.1">
    <property type="nucleotide sequence ID" value="NC_000962.3"/>
</dbReference>
<dbReference type="SMR" id="P9WPJ1"/>
<dbReference type="STRING" id="83332.Rv2824c"/>
<dbReference type="PaxDb" id="83332-Rv2824c"/>
<dbReference type="DNASU" id="888945"/>
<dbReference type="GeneID" id="888945"/>
<dbReference type="KEGG" id="mtu:Rv2824c"/>
<dbReference type="KEGG" id="mtv:RVBD_2824c"/>
<dbReference type="TubercuList" id="Rv2824c"/>
<dbReference type="eggNOG" id="COG5551">
    <property type="taxonomic scope" value="Bacteria"/>
</dbReference>
<dbReference type="InParanoid" id="P9WPJ1"/>
<dbReference type="OrthoDB" id="9787241at2"/>
<dbReference type="SABIO-RK" id="P9WPJ1"/>
<dbReference type="PHI-base" id="PHI:12080"/>
<dbReference type="Proteomes" id="UP000001584">
    <property type="component" value="Chromosome"/>
</dbReference>
<dbReference type="GO" id="GO:0004519">
    <property type="term" value="F:endonuclease activity"/>
    <property type="evidence" value="ECO:0007669"/>
    <property type="project" value="UniProtKB-KW"/>
</dbReference>
<dbReference type="GO" id="GO:0003723">
    <property type="term" value="F:RNA binding"/>
    <property type="evidence" value="ECO:0007669"/>
    <property type="project" value="UniProtKB-KW"/>
</dbReference>
<dbReference type="GO" id="GO:0051607">
    <property type="term" value="P:defense response to virus"/>
    <property type="evidence" value="ECO:0007669"/>
    <property type="project" value="UniProtKB-KW"/>
</dbReference>
<dbReference type="CDD" id="cd21141">
    <property type="entry name" value="Cas6_III-like"/>
    <property type="match status" value="1"/>
</dbReference>
<dbReference type="Gene3D" id="3.30.70.1900">
    <property type="match status" value="1"/>
</dbReference>
<dbReference type="InterPro" id="IPR019267">
    <property type="entry name" value="CRISPR-assoc_Cas6_C"/>
</dbReference>
<dbReference type="InterPro" id="IPR010156">
    <property type="entry name" value="CRISPR-assoc_prot_Cas6"/>
</dbReference>
<dbReference type="NCBIfam" id="TIGR01877">
    <property type="entry name" value="cas_cas6"/>
    <property type="match status" value="1"/>
</dbReference>
<dbReference type="Pfam" id="PF10040">
    <property type="entry name" value="CRISPR_Cas6"/>
    <property type="match status" value="1"/>
</dbReference>
<gene>
    <name type="primary">cas6</name>
    <name type="ordered locus">Rv2824c</name>
</gene>
<comment type="function">
    <text evidence="2 4">CRISPR (clustered regularly interspaced short palindromic repeat) is an adaptive immune system that provides protection against mobile genetic elements (viruses, transposable elements and conjugative plasmids). CRISPR clusters contain sequences complementary to antecedent mobile elements (spacers) and target invading nucleic acids. CRISPR clusters are transcribed and processed into CRISPR RNA (crRNA). The type III-A Csm effector complex binds crRNA and acts as a crRNA-guided RNase, DNase and cyclic oligoadenylate synthase; binding of target RNA cognate to the crRNA is required for all activities (Probable). This CRISPR-Cas system protects bacteria against transformation with plasmids containing DNA homologous to its spacer regions (PubMed:29979631).</text>
</comment>
<comment type="function">
    <text evidence="2">Processes pre-crRNA into individual crRNA units; accurate cleavage of pre-crRNA depends on a 3' stem-loop and the sequence of the bases in the stem. The mature crRNA is unusual for type III-A systems as it does not undergo 3' processing after Cas6 cleavage. Mature crRNA is about 71 nucleotides (nt long) with an 8 nt 5' handle and 28 nt repeat with a 10 nt stem-loop at the 3' end.</text>
</comment>
<comment type="cofactor">
    <cofactor evidence="2">
        <name>a divalent metal cation</name>
        <dbReference type="ChEBI" id="CHEBI:60240"/>
    </cofactor>
    <text evidence="2">Ca(2+) and Mn(2+) stimulate processing of pre-crRNA.</text>
</comment>
<comment type="activity regulation">
    <text evidence="2">Pre-crRNA processing is inhibited by EDTA.</text>
</comment>
<comment type="biophysicochemical properties">
    <kinetics>
        <KM evidence="2">8.395 uM for repeat pre-crRNA in presence of 0.125 mM CaCl(2)</KM>
        <text evidence="2">kcat is 12.156 min(-1) in presence of CaCl(2).</text>
    </kinetics>
</comment>
<comment type="disruption phenotype">
    <text evidence="2">Deletion of this gene alone blocks maturation of pre-crRNA (PubMed:29979631). Deletion of the entire CRISPR-Cas locus (cas6 to cas2, Rv2824c to Rv2816c) decreases resistance to plasmids encoding spacer elements about 6-fold (PubMed:29979631).</text>
</comment>
<comment type="miscellaneous">
    <text evidence="4">Encoded in a type III-A CRISPR locus.</text>
</comment>
<comment type="similarity">
    <text evidence="3">Belongs to the CRISPR-associated protein Cas6/Cse3/CasE family.</text>
</comment>
<feature type="chain" id="PRO_0000418222" description="CRISPR-associated endoribonuclease Cas6">
    <location>
        <begin position="1"/>
        <end position="314"/>
    </location>
</feature>
<feature type="region of interest" description="Disordered" evidence="1">
    <location>
        <begin position="1"/>
        <end position="29"/>
    </location>
</feature>
<feature type="mutagenesis site" description="Incorrect processing of pre-crRNA, binds pre-crRNA." evidence="2">
    <original>H</original>
    <variation>A</variation>
    <location>
        <position position="99"/>
    </location>
</feature>
<feature type="mutagenesis site" description="Incorrect processing of pre-crRNA, no longer binds pre-crRNA." evidence="2">
    <original>GMG</original>
    <variation>AMA</variation>
    <location>
        <begin position="295"/>
        <end position="297"/>
    </location>
</feature>
<protein>
    <recommendedName>
        <fullName>CRISPR-associated endoribonuclease Cas6</fullName>
        <ecNumber evidence="2">3.1.-.-</ecNumber>
    </recommendedName>
</protein>
<reference key="1">
    <citation type="journal article" date="1998" name="Nature">
        <title>Deciphering the biology of Mycobacterium tuberculosis from the complete genome sequence.</title>
        <authorList>
            <person name="Cole S.T."/>
            <person name="Brosch R."/>
            <person name="Parkhill J."/>
            <person name="Garnier T."/>
            <person name="Churcher C.M."/>
            <person name="Harris D.E."/>
            <person name="Gordon S.V."/>
            <person name="Eiglmeier K."/>
            <person name="Gas S."/>
            <person name="Barry C.E. III"/>
            <person name="Tekaia F."/>
            <person name="Badcock K."/>
            <person name="Basham D."/>
            <person name="Brown D."/>
            <person name="Chillingworth T."/>
            <person name="Connor R."/>
            <person name="Davies R.M."/>
            <person name="Devlin K."/>
            <person name="Feltwell T."/>
            <person name="Gentles S."/>
            <person name="Hamlin N."/>
            <person name="Holroyd S."/>
            <person name="Hornsby T."/>
            <person name="Jagels K."/>
            <person name="Krogh A."/>
            <person name="McLean J."/>
            <person name="Moule S."/>
            <person name="Murphy L.D."/>
            <person name="Oliver S."/>
            <person name="Osborne J."/>
            <person name="Quail M.A."/>
            <person name="Rajandream M.A."/>
            <person name="Rogers J."/>
            <person name="Rutter S."/>
            <person name="Seeger K."/>
            <person name="Skelton S."/>
            <person name="Squares S."/>
            <person name="Squares R."/>
            <person name="Sulston J.E."/>
            <person name="Taylor K."/>
            <person name="Whitehead S."/>
            <person name="Barrell B.G."/>
        </authorList>
    </citation>
    <scope>NUCLEOTIDE SEQUENCE [LARGE SCALE GENOMIC DNA]</scope>
    <source>
        <strain>ATCC 25618 / H37Rv</strain>
    </source>
</reference>
<reference key="2">
    <citation type="journal article" date="2011" name="Mol. Cell. Proteomics">
        <title>Proteogenomic analysis of Mycobacterium tuberculosis by high resolution mass spectrometry.</title>
        <authorList>
            <person name="Kelkar D.S."/>
            <person name="Kumar D."/>
            <person name="Kumar P."/>
            <person name="Balakrishnan L."/>
            <person name="Muthusamy B."/>
            <person name="Yadav A.K."/>
            <person name="Shrivastava P."/>
            <person name="Marimuthu A."/>
            <person name="Anand S."/>
            <person name="Sundaram H."/>
            <person name="Kingsbury R."/>
            <person name="Harsha H.C."/>
            <person name="Nair B."/>
            <person name="Prasad T.S."/>
            <person name="Chauhan D.S."/>
            <person name="Katoch K."/>
            <person name="Katoch V.M."/>
            <person name="Kumar P."/>
            <person name="Chaerkady R."/>
            <person name="Ramachandran S."/>
            <person name="Dash D."/>
            <person name="Pandey A."/>
        </authorList>
    </citation>
    <scope>IDENTIFICATION BY MASS SPECTROMETRY [LARGE SCALE ANALYSIS]</scope>
    <source>
        <strain>ATCC 25618 / H37Rv</strain>
    </source>
</reference>
<reference key="3">
    <citation type="journal article" date="2019" name="FASEB J.">
        <title>Mycobacterium tuberculosis type III-A CRISPR/Cas system crRNA and its maturation have atypical features.</title>
        <authorList>
            <person name="Wei W."/>
            <person name="Zhang S."/>
            <person name="Fleming J."/>
            <person name="Chen Y."/>
            <person name="Li Z."/>
            <person name="Fan S."/>
            <person name="Liu Y."/>
            <person name="Wang W."/>
            <person name="Wang T."/>
            <person name="Liu Y."/>
            <person name="Ren B."/>
            <person name="Wang M."/>
            <person name="Jiao J."/>
            <person name="Chen Y."/>
            <person name="Zhou Y."/>
            <person name="Zhou Y."/>
            <person name="Gu S."/>
            <person name="Zhang X."/>
            <person name="Wan L."/>
            <person name="Chen T."/>
            <person name="Zhou L."/>
            <person name="Chen Y."/>
            <person name="Zhang X.E."/>
            <person name="Li C."/>
            <person name="Zhang H."/>
            <person name="Bi L."/>
        </authorList>
    </citation>
    <scope>FUNCTION IN PLASMID RESISTANCE</scope>
    <scope>FUNCTION IN PRE-CRRNA PROCESSING</scope>
    <scope>COFACTOR</scope>
    <scope>ACTIVITY REGULATION</scope>
    <scope>BIOPHYSICOCHEMICAL PROPERTIES</scope>
    <scope>DISRUPTION PHENOTYPE</scope>
    <scope>MUTAGENESIS OF HIS-99 AND 295-GLY--GLY-297</scope>
    <scope>RNA-BINDING</scope>
    <source>
        <strain>H37Rv</strain>
    </source>
</reference>
<evidence type="ECO:0000256" key="1">
    <source>
        <dbReference type="SAM" id="MobiDB-lite"/>
    </source>
</evidence>
<evidence type="ECO:0000269" key="2">
    <source>
    </source>
</evidence>
<evidence type="ECO:0000305" key="3"/>
<evidence type="ECO:0000305" key="4">
    <source>
    </source>
</evidence>
<sequence>MAARRGGIRRTDLLRRSGQPRGRHRASAAESGLTWISPTLILVGFSHRGDRRMTEHLSRLTLTLEVDAPLERARVATLGPHLHGVLMESIPADYVQTLHTVPVNPYSQYALARSTTSLEWKISTLTNEARQQIVGPINDAAFAGFRLRASGIATQVTSRSLEQNPLSQFARIFYARPETRKFRVEFLTPTAFKQSGEYVFWPDPRLVFQSLAQKYGAIVDGEEPDPGLIAEFGQSVRLSAFRVASAPFAVGAARVPGFTGSATFTVRGVDTFASYIAALLWFGEFSGCGIKASMGMGAIRVQPLAPREKCVPKP</sequence>
<name>CAS6_MYCTU</name>